<keyword id="KW-1185">Reference proteome</keyword>
<feature type="chain" id="PRO_0000326125" description="Uncharacterized protein C2orf80 homolog">
    <location>
        <begin position="1"/>
        <end position="168"/>
    </location>
</feature>
<feature type="region of interest" description="Disordered" evidence="1">
    <location>
        <begin position="125"/>
        <end position="168"/>
    </location>
</feature>
<feature type="compositionally biased region" description="Polar residues" evidence="1">
    <location>
        <begin position="151"/>
        <end position="162"/>
    </location>
</feature>
<organism>
    <name type="scientific">Pongo abelii</name>
    <name type="common">Sumatran orangutan</name>
    <name type="synonym">Pongo pygmaeus abelii</name>
    <dbReference type="NCBI Taxonomy" id="9601"/>
    <lineage>
        <taxon>Eukaryota</taxon>
        <taxon>Metazoa</taxon>
        <taxon>Chordata</taxon>
        <taxon>Craniata</taxon>
        <taxon>Vertebrata</taxon>
        <taxon>Euteleostomi</taxon>
        <taxon>Mammalia</taxon>
        <taxon>Eutheria</taxon>
        <taxon>Euarchontoglires</taxon>
        <taxon>Primates</taxon>
        <taxon>Haplorrhini</taxon>
        <taxon>Catarrhini</taxon>
        <taxon>Hominidae</taxon>
        <taxon>Pongo</taxon>
    </lineage>
</organism>
<protein>
    <recommendedName>
        <fullName>Uncharacterized protein C2orf80 homolog</fullName>
    </recommendedName>
</protein>
<proteinExistence type="evidence at transcript level"/>
<dbReference type="EMBL" id="CR857889">
    <property type="protein sequence ID" value="CAH90142.1"/>
    <property type="molecule type" value="mRNA"/>
</dbReference>
<dbReference type="RefSeq" id="NP_001125035.1">
    <property type="nucleotide sequence ID" value="NM_001131563.1"/>
</dbReference>
<dbReference type="RefSeq" id="XP_054404549.1">
    <property type="nucleotide sequence ID" value="XM_054548574.1"/>
</dbReference>
<dbReference type="GeneID" id="100171916"/>
<dbReference type="KEGG" id="pon:100171916"/>
<dbReference type="CTD" id="114564350"/>
<dbReference type="eggNOG" id="ENOG502S0E2">
    <property type="taxonomic scope" value="Eukaryota"/>
</dbReference>
<dbReference type="InParanoid" id="Q5RDL5"/>
<dbReference type="OrthoDB" id="9905607at2759"/>
<dbReference type="Proteomes" id="UP000001595">
    <property type="component" value="Unplaced"/>
</dbReference>
<dbReference type="InterPro" id="IPR038776">
    <property type="entry name" value="C2orf80"/>
</dbReference>
<dbReference type="PANTHER" id="PTHR36296:SF1">
    <property type="entry name" value="CHROMOSOME 2 OPEN READING FRAME 80"/>
    <property type="match status" value="1"/>
</dbReference>
<dbReference type="PANTHER" id="PTHR36296">
    <property type="entry name" value="GAMMA-CRYSTALLIN A"/>
    <property type="match status" value="1"/>
</dbReference>
<dbReference type="Pfam" id="PF17718">
    <property type="entry name" value="DUF5563"/>
    <property type="match status" value="1"/>
</dbReference>
<sequence>MPPEAEKEQKHWNRSQAHYDLAISVALQWLDPSEDLTWLEWEELKMPFHGRPIYPNRREREAMILSSYAGILMNSIPIEEVFKIYGADSSADSGTIKVPRVSSLRLSLHPFAMLTAPKAAAYARKQSVKSRKGTTNKNATSISAKEANATEWKSSQRFSNTQPKHKVT</sequence>
<name>CB080_PONAB</name>
<reference key="1">
    <citation type="submission" date="2004-11" db="EMBL/GenBank/DDBJ databases">
        <authorList>
            <consortium name="The German cDNA consortium"/>
        </authorList>
    </citation>
    <scope>NUCLEOTIDE SEQUENCE [LARGE SCALE MRNA]</scope>
    <source>
        <tissue>Brain cortex</tissue>
    </source>
</reference>
<evidence type="ECO:0000256" key="1">
    <source>
        <dbReference type="SAM" id="MobiDB-lite"/>
    </source>
</evidence>
<accession>Q5RDL5</accession>